<feature type="chain" id="PRO_1000017484" description="Large ribosomal subunit protein bL27">
    <location>
        <begin position="1"/>
        <end position="84"/>
    </location>
</feature>
<feature type="region of interest" description="Disordered" evidence="2">
    <location>
        <begin position="1"/>
        <end position="20"/>
    </location>
</feature>
<keyword id="KW-0687">Ribonucleoprotein</keyword>
<keyword id="KW-0689">Ribosomal protein</keyword>
<protein>
    <recommendedName>
        <fullName evidence="1">Large ribosomal subunit protein bL27</fullName>
    </recommendedName>
    <alternativeName>
        <fullName evidence="3">50S ribosomal protein L27</fullName>
    </alternativeName>
</protein>
<evidence type="ECO:0000255" key="1">
    <source>
        <dbReference type="HAMAP-Rule" id="MF_00539"/>
    </source>
</evidence>
<evidence type="ECO:0000256" key="2">
    <source>
        <dbReference type="SAM" id="MobiDB-lite"/>
    </source>
</evidence>
<evidence type="ECO:0000305" key="3"/>
<dbReference type="EMBL" id="CP000439">
    <property type="protein sequence ID" value="ABK89568.1"/>
    <property type="molecule type" value="Genomic_DNA"/>
</dbReference>
<dbReference type="RefSeq" id="WP_003020646.1">
    <property type="nucleotide sequence ID" value="NZ_CP009633.1"/>
</dbReference>
<dbReference type="SMR" id="A0Q5Q3"/>
<dbReference type="GeneID" id="75263827"/>
<dbReference type="KEGG" id="ftn:FTN_0676"/>
<dbReference type="KEGG" id="ftx:AW25_1349"/>
<dbReference type="BioCyc" id="FTUL401614:G1G75-703-MONOMER"/>
<dbReference type="Proteomes" id="UP000000762">
    <property type="component" value="Chromosome"/>
</dbReference>
<dbReference type="GO" id="GO:0022625">
    <property type="term" value="C:cytosolic large ribosomal subunit"/>
    <property type="evidence" value="ECO:0007669"/>
    <property type="project" value="TreeGrafter"/>
</dbReference>
<dbReference type="GO" id="GO:0003735">
    <property type="term" value="F:structural constituent of ribosome"/>
    <property type="evidence" value="ECO:0007669"/>
    <property type="project" value="InterPro"/>
</dbReference>
<dbReference type="GO" id="GO:0006412">
    <property type="term" value="P:translation"/>
    <property type="evidence" value="ECO:0007669"/>
    <property type="project" value="UniProtKB-UniRule"/>
</dbReference>
<dbReference type="FunFam" id="2.40.50.100:FF:000001">
    <property type="entry name" value="50S ribosomal protein L27"/>
    <property type="match status" value="1"/>
</dbReference>
<dbReference type="Gene3D" id="2.40.50.100">
    <property type="match status" value="1"/>
</dbReference>
<dbReference type="HAMAP" id="MF_00539">
    <property type="entry name" value="Ribosomal_bL27"/>
    <property type="match status" value="1"/>
</dbReference>
<dbReference type="InterPro" id="IPR001684">
    <property type="entry name" value="Ribosomal_bL27"/>
</dbReference>
<dbReference type="InterPro" id="IPR018261">
    <property type="entry name" value="Ribosomal_bL27_CS"/>
</dbReference>
<dbReference type="NCBIfam" id="TIGR00062">
    <property type="entry name" value="L27"/>
    <property type="match status" value="1"/>
</dbReference>
<dbReference type="PANTHER" id="PTHR15893:SF0">
    <property type="entry name" value="LARGE RIBOSOMAL SUBUNIT PROTEIN BL27M"/>
    <property type="match status" value="1"/>
</dbReference>
<dbReference type="PANTHER" id="PTHR15893">
    <property type="entry name" value="RIBOSOMAL PROTEIN L27"/>
    <property type="match status" value="1"/>
</dbReference>
<dbReference type="Pfam" id="PF01016">
    <property type="entry name" value="Ribosomal_L27"/>
    <property type="match status" value="1"/>
</dbReference>
<dbReference type="PRINTS" id="PR00063">
    <property type="entry name" value="RIBOSOMALL27"/>
</dbReference>
<dbReference type="SUPFAM" id="SSF110324">
    <property type="entry name" value="Ribosomal L27 protein-like"/>
    <property type="match status" value="1"/>
</dbReference>
<dbReference type="PROSITE" id="PS00831">
    <property type="entry name" value="RIBOSOMAL_L27"/>
    <property type="match status" value="1"/>
</dbReference>
<gene>
    <name evidence="1" type="primary">rpmA</name>
    <name type="ordered locus">FTN_0676</name>
</gene>
<accession>A0Q5Q3</accession>
<name>RL27_FRATN</name>
<reference key="1">
    <citation type="journal article" date="2007" name="Genome Biol.">
        <title>Comparison of Francisella tularensis genomes reveals evolutionary events associated with the emergence of human pathogenic strains.</title>
        <authorList>
            <person name="Rohmer L."/>
            <person name="Fong C."/>
            <person name="Abmayr S."/>
            <person name="Wasnick M."/>
            <person name="Larson Freeman T.J."/>
            <person name="Radey M."/>
            <person name="Guina T."/>
            <person name="Svensson K."/>
            <person name="Hayden H.S."/>
            <person name="Jacobs M."/>
            <person name="Gallagher L.A."/>
            <person name="Manoil C."/>
            <person name="Ernst R.K."/>
            <person name="Drees B."/>
            <person name="Buckley D."/>
            <person name="Haugen E."/>
            <person name="Bovee D."/>
            <person name="Zhou Y."/>
            <person name="Chang J."/>
            <person name="Levy R."/>
            <person name="Lim R."/>
            <person name="Gillett W."/>
            <person name="Guenthener D."/>
            <person name="Kang A."/>
            <person name="Shaffer S.A."/>
            <person name="Taylor G."/>
            <person name="Chen J."/>
            <person name="Gallis B."/>
            <person name="D'Argenio D.A."/>
            <person name="Forsman M."/>
            <person name="Olson M.V."/>
            <person name="Goodlett D.R."/>
            <person name="Kaul R."/>
            <person name="Miller S.I."/>
            <person name="Brittnacher M.J."/>
        </authorList>
    </citation>
    <scope>NUCLEOTIDE SEQUENCE [LARGE SCALE GENOMIC DNA]</scope>
    <source>
        <strain>U112</strain>
    </source>
</reference>
<comment type="similarity">
    <text evidence="1">Belongs to the bacterial ribosomal protein bL27 family.</text>
</comment>
<organism>
    <name type="scientific">Francisella tularensis subsp. novicida (strain U112)</name>
    <dbReference type="NCBI Taxonomy" id="401614"/>
    <lineage>
        <taxon>Bacteria</taxon>
        <taxon>Pseudomonadati</taxon>
        <taxon>Pseudomonadota</taxon>
        <taxon>Gammaproteobacteria</taxon>
        <taxon>Thiotrichales</taxon>
        <taxon>Francisellaceae</taxon>
        <taxon>Francisella</taxon>
    </lineage>
</organism>
<sequence>MAHKKAGGSTRNGRDSNPKYLGVKRYGGEFVKAGTIIIRQRGTKTHPGVNVGCGKDHTLFALKDGTVKFHTGGALNRKFVSIEE</sequence>
<proteinExistence type="inferred from homology"/>